<organism>
    <name type="scientific">Vibrio atlanticus (strain LGP32)</name>
    <name type="common">Vibrio splendidus (strain Mel32)</name>
    <dbReference type="NCBI Taxonomy" id="575788"/>
    <lineage>
        <taxon>Bacteria</taxon>
        <taxon>Pseudomonadati</taxon>
        <taxon>Pseudomonadota</taxon>
        <taxon>Gammaproteobacteria</taxon>
        <taxon>Vibrionales</taxon>
        <taxon>Vibrionaceae</taxon>
        <taxon>Vibrio</taxon>
    </lineage>
</organism>
<proteinExistence type="inferred from homology"/>
<name>LPXH_VIBA3</name>
<feature type="chain" id="PRO_1000191034" description="UDP-2,3-diacylglucosamine hydrolase">
    <location>
        <begin position="1"/>
        <end position="244"/>
    </location>
</feature>
<feature type="binding site" evidence="1">
    <location>
        <position position="8"/>
    </location>
    <ligand>
        <name>Mn(2+)</name>
        <dbReference type="ChEBI" id="CHEBI:29035"/>
        <label>1</label>
    </ligand>
</feature>
<feature type="binding site" evidence="1">
    <location>
        <position position="10"/>
    </location>
    <ligand>
        <name>Mn(2+)</name>
        <dbReference type="ChEBI" id="CHEBI:29035"/>
        <label>1</label>
    </ligand>
</feature>
<feature type="binding site" evidence="1">
    <location>
        <position position="41"/>
    </location>
    <ligand>
        <name>Mn(2+)</name>
        <dbReference type="ChEBI" id="CHEBI:29035"/>
        <label>1</label>
    </ligand>
</feature>
<feature type="binding site" evidence="1">
    <location>
        <position position="41"/>
    </location>
    <ligand>
        <name>Mn(2+)</name>
        <dbReference type="ChEBI" id="CHEBI:29035"/>
        <label>2</label>
    </ligand>
</feature>
<feature type="binding site" evidence="1">
    <location>
        <begin position="79"/>
        <end position="80"/>
    </location>
    <ligand>
        <name>substrate</name>
    </ligand>
</feature>
<feature type="binding site" evidence="1">
    <location>
        <position position="79"/>
    </location>
    <ligand>
        <name>Mn(2+)</name>
        <dbReference type="ChEBI" id="CHEBI:29035"/>
        <label>2</label>
    </ligand>
</feature>
<feature type="binding site" evidence="1">
    <location>
        <position position="114"/>
    </location>
    <ligand>
        <name>Mn(2+)</name>
        <dbReference type="ChEBI" id="CHEBI:29035"/>
        <label>2</label>
    </ligand>
</feature>
<feature type="binding site" evidence="1">
    <location>
        <position position="122"/>
    </location>
    <ligand>
        <name>substrate</name>
    </ligand>
</feature>
<feature type="binding site" evidence="1">
    <location>
        <position position="164"/>
    </location>
    <ligand>
        <name>substrate</name>
    </ligand>
</feature>
<feature type="binding site" evidence="1">
    <location>
        <position position="167"/>
    </location>
    <ligand>
        <name>substrate</name>
    </ligand>
</feature>
<feature type="binding site" evidence="1">
    <location>
        <position position="195"/>
    </location>
    <ligand>
        <name>Mn(2+)</name>
        <dbReference type="ChEBI" id="CHEBI:29035"/>
        <label>2</label>
    </ligand>
</feature>
<feature type="binding site" evidence="1">
    <location>
        <position position="195"/>
    </location>
    <ligand>
        <name>substrate</name>
    </ligand>
</feature>
<feature type="binding site" evidence="1">
    <location>
        <position position="197"/>
    </location>
    <ligand>
        <name>Mn(2+)</name>
        <dbReference type="ChEBI" id="CHEBI:29035"/>
        <label>1</label>
    </ligand>
</feature>
<dbReference type="EC" id="3.6.1.54" evidence="1"/>
<dbReference type="EMBL" id="FM954972">
    <property type="protein sequence ID" value="CAV19193.1"/>
    <property type="molecule type" value="Genomic_DNA"/>
</dbReference>
<dbReference type="SMR" id="B7VGZ3"/>
<dbReference type="STRING" id="575788.VS_2016"/>
<dbReference type="KEGG" id="vsp:VS_2016"/>
<dbReference type="PATRIC" id="fig|575788.5.peg.3295"/>
<dbReference type="eggNOG" id="COG2908">
    <property type="taxonomic scope" value="Bacteria"/>
</dbReference>
<dbReference type="HOGENOM" id="CLU_074586_0_0_6"/>
<dbReference type="UniPathway" id="UPA00359">
    <property type="reaction ID" value="UER00480"/>
</dbReference>
<dbReference type="Proteomes" id="UP000009100">
    <property type="component" value="Chromosome 1"/>
</dbReference>
<dbReference type="GO" id="GO:0005737">
    <property type="term" value="C:cytoplasm"/>
    <property type="evidence" value="ECO:0007669"/>
    <property type="project" value="InterPro"/>
</dbReference>
<dbReference type="GO" id="GO:0019897">
    <property type="term" value="C:extrinsic component of plasma membrane"/>
    <property type="evidence" value="ECO:0007669"/>
    <property type="project" value="UniProtKB-UniRule"/>
</dbReference>
<dbReference type="GO" id="GO:0030145">
    <property type="term" value="F:manganese ion binding"/>
    <property type="evidence" value="ECO:0007669"/>
    <property type="project" value="UniProtKB-UniRule"/>
</dbReference>
<dbReference type="GO" id="GO:0008758">
    <property type="term" value="F:UDP-2,3-diacylglucosamine hydrolase activity"/>
    <property type="evidence" value="ECO:0007669"/>
    <property type="project" value="UniProtKB-UniRule"/>
</dbReference>
<dbReference type="GO" id="GO:0009245">
    <property type="term" value="P:lipid A biosynthetic process"/>
    <property type="evidence" value="ECO:0007669"/>
    <property type="project" value="UniProtKB-UniRule"/>
</dbReference>
<dbReference type="CDD" id="cd07398">
    <property type="entry name" value="MPP_YbbF-LpxH"/>
    <property type="match status" value="1"/>
</dbReference>
<dbReference type="Gene3D" id="3.60.21.10">
    <property type="match status" value="1"/>
</dbReference>
<dbReference type="HAMAP" id="MF_00575">
    <property type="entry name" value="LpxH"/>
    <property type="match status" value="1"/>
</dbReference>
<dbReference type="InterPro" id="IPR004843">
    <property type="entry name" value="Calcineurin-like_PHP_ApaH"/>
</dbReference>
<dbReference type="InterPro" id="IPR043461">
    <property type="entry name" value="LpxH-like"/>
</dbReference>
<dbReference type="InterPro" id="IPR029052">
    <property type="entry name" value="Metallo-depent_PP-like"/>
</dbReference>
<dbReference type="InterPro" id="IPR010138">
    <property type="entry name" value="UDP-diacylglucosamine_Hdrlase"/>
</dbReference>
<dbReference type="NCBIfam" id="TIGR01854">
    <property type="entry name" value="lipid_A_lpxH"/>
    <property type="match status" value="1"/>
</dbReference>
<dbReference type="NCBIfam" id="NF003743">
    <property type="entry name" value="PRK05340.1"/>
    <property type="match status" value="1"/>
</dbReference>
<dbReference type="PANTHER" id="PTHR34990:SF1">
    <property type="entry name" value="UDP-2,3-DIACYLGLUCOSAMINE HYDROLASE"/>
    <property type="match status" value="1"/>
</dbReference>
<dbReference type="PANTHER" id="PTHR34990">
    <property type="entry name" value="UDP-2,3-DIACYLGLUCOSAMINE HYDROLASE-RELATED"/>
    <property type="match status" value="1"/>
</dbReference>
<dbReference type="Pfam" id="PF00149">
    <property type="entry name" value="Metallophos"/>
    <property type="match status" value="1"/>
</dbReference>
<dbReference type="SUPFAM" id="SSF56300">
    <property type="entry name" value="Metallo-dependent phosphatases"/>
    <property type="match status" value="1"/>
</dbReference>
<comment type="function">
    <text evidence="1">Hydrolyzes the pyrophosphate bond of UDP-2,3-diacylglucosamine to yield 2,3-diacylglucosamine 1-phosphate (lipid X) and UMP by catalyzing the attack of water at the alpha-P atom. Involved in the biosynthesis of lipid A, a phosphorylated glycolipid that anchors the lipopolysaccharide to the outer membrane of the cell.</text>
</comment>
<comment type="catalytic activity">
    <reaction evidence="1">
        <text>UDP-2-N,3-O-bis[(3R)-3-hydroxytetradecanoyl]-alpha-D-glucosamine + H2O = 2-N,3-O-bis[(3R)-3-hydroxytetradecanoyl]-alpha-D-glucosaminyl 1-phosphate + UMP + 2 H(+)</text>
        <dbReference type="Rhea" id="RHEA:25213"/>
        <dbReference type="ChEBI" id="CHEBI:15377"/>
        <dbReference type="ChEBI" id="CHEBI:15378"/>
        <dbReference type="ChEBI" id="CHEBI:57865"/>
        <dbReference type="ChEBI" id="CHEBI:57957"/>
        <dbReference type="ChEBI" id="CHEBI:78847"/>
        <dbReference type="EC" id="3.6.1.54"/>
    </reaction>
</comment>
<comment type="cofactor">
    <cofactor evidence="1">
        <name>Mn(2+)</name>
        <dbReference type="ChEBI" id="CHEBI:29035"/>
    </cofactor>
    <text evidence="1">Binds 2 Mn(2+) ions per subunit in a binuclear metal center.</text>
</comment>
<comment type="pathway">
    <text evidence="1">Glycolipid biosynthesis; lipid IV(A) biosynthesis; lipid IV(A) from (3R)-3-hydroxytetradecanoyl-[acyl-carrier-protein] and UDP-N-acetyl-alpha-D-glucosamine: step 4/6.</text>
</comment>
<comment type="subcellular location">
    <subcellularLocation>
        <location evidence="1">Cell inner membrane</location>
        <topology evidence="1">Peripheral membrane protein</topology>
        <orientation evidence="1">Cytoplasmic side</orientation>
    </subcellularLocation>
</comment>
<comment type="similarity">
    <text evidence="1">Belongs to the LpxH family.</text>
</comment>
<gene>
    <name evidence="1" type="primary">lpxH</name>
    <name type="ordered locus">VS_2016</name>
</gene>
<keyword id="KW-0997">Cell inner membrane</keyword>
<keyword id="KW-1003">Cell membrane</keyword>
<keyword id="KW-0378">Hydrolase</keyword>
<keyword id="KW-0441">Lipid A biosynthesis</keyword>
<keyword id="KW-0444">Lipid biosynthesis</keyword>
<keyword id="KW-0443">Lipid metabolism</keyword>
<keyword id="KW-0464">Manganese</keyword>
<keyword id="KW-0472">Membrane</keyword>
<keyword id="KW-0479">Metal-binding</keyword>
<reference key="1">
    <citation type="submission" date="2009-02" db="EMBL/GenBank/DDBJ databases">
        <title>Vibrio splendidus str. LGP32 complete genome.</title>
        <authorList>
            <person name="Mazel D."/>
            <person name="Le Roux F."/>
        </authorList>
    </citation>
    <scope>NUCLEOTIDE SEQUENCE [LARGE SCALE GENOMIC DNA]</scope>
    <source>
        <strain>LGP32</strain>
    </source>
</reference>
<sequence>MKTYFISDLHLAPSRQDITDCFLTFMKNEALEADALYVLGDLFEFWIGDDDTSEFANSIRQTFIDLVNTGVPCYFTQGNRDFLVGKKFAKQTGVQLLDEVSTIDIYGQKAVVLHGDTLCTEDIKYLAFREKVHQPWLQWVFNRIPFFIKKKIVSKVQSDIKDDKQTKSLDIMDVTQQEVENVMKQHNVDLMIHGHTHRPNIHSFSANNCTKTRIVLGDWYTQGSVLVFTPQSFELQNREFSNRF</sequence>
<evidence type="ECO:0000255" key="1">
    <source>
        <dbReference type="HAMAP-Rule" id="MF_00575"/>
    </source>
</evidence>
<protein>
    <recommendedName>
        <fullName evidence="1">UDP-2,3-diacylglucosamine hydrolase</fullName>
        <ecNumber evidence="1">3.6.1.54</ecNumber>
    </recommendedName>
    <alternativeName>
        <fullName evidence="1">UDP-2,3-diacylglucosamine diphosphatase</fullName>
    </alternativeName>
</protein>
<accession>B7VGZ3</accession>